<protein>
    <recommendedName>
        <fullName evidence="6">5'-deoxynucleotidase YBR242W</fullName>
        <ecNumber evidence="5">3.1.3.89</ecNumber>
    </recommendedName>
</protein>
<evidence type="ECO:0000250" key="1">
    <source>
        <dbReference type="UniProtKB" id="P53144"/>
    </source>
</evidence>
<evidence type="ECO:0000250" key="2">
    <source>
        <dbReference type="UniProtKB" id="Q7Z4H3"/>
    </source>
</evidence>
<evidence type="ECO:0000255" key="3">
    <source>
        <dbReference type="PROSITE-ProRule" id="PRU01175"/>
    </source>
</evidence>
<evidence type="ECO:0000269" key="4">
    <source>
    </source>
</evidence>
<evidence type="ECO:0000269" key="5">
    <source>
    </source>
</evidence>
<evidence type="ECO:0000305" key="6"/>
<accession>P38331</accession>
<accession>D6VQN8</accession>
<dbReference type="EC" id="3.1.3.89" evidence="5"/>
<dbReference type="EMBL" id="Z36111">
    <property type="protein sequence ID" value="CAA85205.1"/>
    <property type="molecule type" value="Genomic_DNA"/>
</dbReference>
<dbReference type="EMBL" id="AY692615">
    <property type="protein sequence ID" value="AAT92634.1"/>
    <property type="molecule type" value="Genomic_DNA"/>
</dbReference>
<dbReference type="EMBL" id="BK006936">
    <property type="protein sequence ID" value="DAA07358.1"/>
    <property type="molecule type" value="Genomic_DNA"/>
</dbReference>
<dbReference type="PIR" id="S46119">
    <property type="entry name" value="S46119"/>
</dbReference>
<dbReference type="RefSeq" id="NP_009801.1">
    <property type="nucleotide sequence ID" value="NM_001178590.1"/>
</dbReference>
<dbReference type="SMR" id="P38331"/>
<dbReference type="BioGRID" id="32937">
    <property type="interactions" value="42"/>
</dbReference>
<dbReference type="DIP" id="DIP-4887N"/>
<dbReference type="FunCoup" id="P38331">
    <property type="interactions" value="551"/>
</dbReference>
<dbReference type="IntAct" id="P38331">
    <property type="interactions" value="2"/>
</dbReference>
<dbReference type="STRING" id="4932.YBR242W"/>
<dbReference type="iPTMnet" id="P38331"/>
<dbReference type="PaxDb" id="4932-YBR242W"/>
<dbReference type="PeptideAtlas" id="P38331"/>
<dbReference type="EnsemblFungi" id="YBR242W_mRNA">
    <property type="protein sequence ID" value="YBR242W"/>
    <property type="gene ID" value="YBR242W"/>
</dbReference>
<dbReference type="GeneID" id="852544"/>
<dbReference type="KEGG" id="sce:YBR242W"/>
<dbReference type="AGR" id="SGD:S000000446"/>
<dbReference type="SGD" id="S000000446">
    <property type="gene designation" value="YBR242W"/>
</dbReference>
<dbReference type="VEuPathDB" id="FungiDB:YBR242W"/>
<dbReference type="eggNOG" id="KOG3197">
    <property type="taxonomic scope" value="Eukaryota"/>
</dbReference>
<dbReference type="GeneTree" id="ENSGT00390000009937"/>
<dbReference type="HOGENOM" id="CLU_039453_2_0_1"/>
<dbReference type="InParanoid" id="P38331"/>
<dbReference type="OMA" id="TWRLCLM"/>
<dbReference type="OrthoDB" id="10254258at2759"/>
<dbReference type="BioCyc" id="YEAST:G3O-29173-MONOMER"/>
<dbReference type="BioGRID-ORCS" id="852544">
    <property type="hits" value="0 hits in 10 CRISPR screens"/>
</dbReference>
<dbReference type="PRO" id="PR:P38331"/>
<dbReference type="Proteomes" id="UP000002311">
    <property type="component" value="Chromosome II"/>
</dbReference>
<dbReference type="RNAct" id="P38331">
    <property type="molecule type" value="protein"/>
</dbReference>
<dbReference type="GO" id="GO:0005737">
    <property type="term" value="C:cytoplasm"/>
    <property type="evidence" value="ECO:0007005"/>
    <property type="project" value="SGD"/>
</dbReference>
<dbReference type="GO" id="GO:0005634">
    <property type="term" value="C:nucleus"/>
    <property type="evidence" value="ECO:0007005"/>
    <property type="project" value="SGD"/>
</dbReference>
<dbReference type="GO" id="GO:0002953">
    <property type="term" value="F:5'-deoxynucleotidase activity"/>
    <property type="evidence" value="ECO:0000314"/>
    <property type="project" value="SGD"/>
</dbReference>
<dbReference type="GO" id="GO:0050484">
    <property type="term" value="F:GMP 5'-nucleotidase activity"/>
    <property type="evidence" value="ECO:0000314"/>
    <property type="project" value="SGD"/>
</dbReference>
<dbReference type="GO" id="GO:0046872">
    <property type="term" value="F:metal ion binding"/>
    <property type="evidence" value="ECO:0007669"/>
    <property type="project" value="UniProtKB-KW"/>
</dbReference>
<dbReference type="GO" id="GO:0009159">
    <property type="term" value="P:deoxyribonucleoside monophosphate catabolic process"/>
    <property type="evidence" value="ECO:0000314"/>
    <property type="project" value="SGD"/>
</dbReference>
<dbReference type="CDD" id="cd00077">
    <property type="entry name" value="HDc"/>
    <property type="match status" value="1"/>
</dbReference>
<dbReference type="FunFam" id="1.10.3210.10:FF:000011">
    <property type="entry name" value="HD domain-containing protein 2"/>
    <property type="match status" value="1"/>
</dbReference>
<dbReference type="Gene3D" id="1.10.3210.10">
    <property type="entry name" value="Hypothetical protein af1432"/>
    <property type="match status" value="1"/>
</dbReference>
<dbReference type="InterPro" id="IPR003607">
    <property type="entry name" value="HD/PDEase_dom"/>
</dbReference>
<dbReference type="InterPro" id="IPR006674">
    <property type="entry name" value="HD_domain"/>
</dbReference>
<dbReference type="InterPro" id="IPR039356">
    <property type="entry name" value="YfbR/HDDC2"/>
</dbReference>
<dbReference type="PANTHER" id="PTHR11845">
    <property type="entry name" value="5'-DEOXYNUCLEOTIDASE HDDC2"/>
    <property type="match status" value="1"/>
</dbReference>
<dbReference type="PANTHER" id="PTHR11845:SF13">
    <property type="entry name" value="5'-DEOXYNUCLEOTIDASE HDDC2"/>
    <property type="match status" value="1"/>
</dbReference>
<dbReference type="Pfam" id="PF13023">
    <property type="entry name" value="HD_3"/>
    <property type="match status" value="1"/>
</dbReference>
<dbReference type="SMART" id="SM00471">
    <property type="entry name" value="HDc"/>
    <property type="match status" value="1"/>
</dbReference>
<dbReference type="SUPFAM" id="SSF109604">
    <property type="entry name" value="HD-domain/PDEase-like"/>
    <property type="match status" value="1"/>
</dbReference>
<dbReference type="PROSITE" id="PS51831">
    <property type="entry name" value="HD"/>
    <property type="match status" value="1"/>
</dbReference>
<keyword id="KW-0170">Cobalt</keyword>
<keyword id="KW-0378">Hydrolase</keyword>
<keyword id="KW-0460">Magnesium</keyword>
<keyword id="KW-0464">Manganese</keyword>
<keyword id="KW-0479">Metal-binding</keyword>
<keyword id="KW-1185">Reference proteome</keyword>
<reference key="1">
    <citation type="journal article" date="1994" name="EMBO J.">
        <title>Complete DNA sequence of yeast chromosome II.</title>
        <authorList>
            <person name="Feldmann H."/>
            <person name="Aigle M."/>
            <person name="Aljinovic G."/>
            <person name="Andre B."/>
            <person name="Baclet M.C."/>
            <person name="Barthe C."/>
            <person name="Baur A."/>
            <person name="Becam A.-M."/>
            <person name="Biteau N."/>
            <person name="Boles E."/>
            <person name="Brandt T."/>
            <person name="Brendel M."/>
            <person name="Brueckner M."/>
            <person name="Bussereau F."/>
            <person name="Christiansen C."/>
            <person name="Contreras R."/>
            <person name="Crouzet M."/>
            <person name="Cziepluch C."/>
            <person name="Demolis N."/>
            <person name="Delaveau T."/>
            <person name="Doignon F."/>
            <person name="Domdey H."/>
            <person name="Duesterhus S."/>
            <person name="Dubois E."/>
            <person name="Dujon B."/>
            <person name="El Bakkoury M."/>
            <person name="Entian K.-D."/>
            <person name="Feuermann M."/>
            <person name="Fiers W."/>
            <person name="Fobo G.M."/>
            <person name="Fritz C."/>
            <person name="Gassenhuber J."/>
            <person name="Glansdorff N."/>
            <person name="Goffeau A."/>
            <person name="Grivell L.A."/>
            <person name="de Haan M."/>
            <person name="Hein C."/>
            <person name="Herbert C.J."/>
            <person name="Hollenberg C.P."/>
            <person name="Holmstroem K."/>
            <person name="Jacq C."/>
            <person name="Jacquet M."/>
            <person name="Jauniaux J.-C."/>
            <person name="Jonniaux J.-L."/>
            <person name="Kallesoee T."/>
            <person name="Kiesau P."/>
            <person name="Kirchrath L."/>
            <person name="Koetter P."/>
            <person name="Korol S."/>
            <person name="Liebl S."/>
            <person name="Logghe M."/>
            <person name="Lohan A.J.E."/>
            <person name="Louis E.J."/>
            <person name="Li Z.Y."/>
            <person name="Maat M.J."/>
            <person name="Mallet L."/>
            <person name="Mannhaupt G."/>
            <person name="Messenguy F."/>
            <person name="Miosga T."/>
            <person name="Molemans F."/>
            <person name="Mueller S."/>
            <person name="Nasr F."/>
            <person name="Obermaier B."/>
            <person name="Perea J."/>
            <person name="Pierard A."/>
            <person name="Piravandi E."/>
            <person name="Pohl F.M."/>
            <person name="Pohl T.M."/>
            <person name="Potier S."/>
            <person name="Proft M."/>
            <person name="Purnelle B."/>
            <person name="Ramezani Rad M."/>
            <person name="Rieger M."/>
            <person name="Rose M."/>
            <person name="Schaaff-Gerstenschlaeger I."/>
            <person name="Scherens B."/>
            <person name="Schwarzlose C."/>
            <person name="Skala J."/>
            <person name="Slonimski P.P."/>
            <person name="Smits P.H.M."/>
            <person name="Souciet J.-L."/>
            <person name="Steensma H.Y."/>
            <person name="Stucka R."/>
            <person name="Urrestarazu L.A."/>
            <person name="van der Aart Q.J.M."/>
            <person name="Van Dyck L."/>
            <person name="Vassarotti A."/>
            <person name="Vetter I."/>
            <person name="Vierendeels F."/>
            <person name="Vissers S."/>
            <person name="Wagner G."/>
            <person name="de Wergifosse P."/>
            <person name="Wolfe K.H."/>
            <person name="Zagulski M."/>
            <person name="Zimmermann F.K."/>
            <person name="Mewes H.-W."/>
            <person name="Kleine K."/>
        </authorList>
    </citation>
    <scope>NUCLEOTIDE SEQUENCE [LARGE SCALE GENOMIC DNA]</scope>
    <source>
        <strain>ATCC 204508 / S288c</strain>
    </source>
</reference>
<reference key="2">
    <citation type="journal article" date="2014" name="G3 (Bethesda)">
        <title>The reference genome sequence of Saccharomyces cerevisiae: Then and now.</title>
        <authorList>
            <person name="Engel S.R."/>
            <person name="Dietrich F.S."/>
            <person name="Fisk D.G."/>
            <person name="Binkley G."/>
            <person name="Balakrishnan R."/>
            <person name="Costanzo M.C."/>
            <person name="Dwight S.S."/>
            <person name="Hitz B.C."/>
            <person name="Karra K."/>
            <person name="Nash R.S."/>
            <person name="Weng S."/>
            <person name="Wong E.D."/>
            <person name="Lloyd P."/>
            <person name="Skrzypek M.S."/>
            <person name="Miyasato S.R."/>
            <person name="Simison M."/>
            <person name="Cherry J.M."/>
        </authorList>
    </citation>
    <scope>GENOME REANNOTATION</scope>
    <source>
        <strain>ATCC 204508 / S288c</strain>
    </source>
</reference>
<reference key="3">
    <citation type="journal article" date="2007" name="Genome Res.">
        <title>Approaching a complete repository of sequence-verified protein-encoding clones for Saccharomyces cerevisiae.</title>
        <authorList>
            <person name="Hu Y."/>
            <person name="Rolfs A."/>
            <person name="Bhullar B."/>
            <person name="Murthy T.V.S."/>
            <person name="Zhu C."/>
            <person name="Berger M.F."/>
            <person name="Camargo A.A."/>
            <person name="Kelley F."/>
            <person name="McCarron S."/>
            <person name="Jepson D."/>
            <person name="Richardson A."/>
            <person name="Raphael J."/>
            <person name="Moreira D."/>
            <person name="Taycher E."/>
            <person name="Zuo D."/>
            <person name="Mohr S."/>
            <person name="Kane M.F."/>
            <person name="Williamson J."/>
            <person name="Simpson A.J.G."/>
            <person name="Bulyk M.L."/>
            <person name="Harlow E."/>
            <person name="Marsischky G."/>
            <person name="Kolodner R.D."/>
            <person name="LaBaer J."/>
        </authorList>
    </citation>
    <scope>NUCLEOTIDE SEQUENCE [GENOMIC DNA]</scope>
    <source>
        <strain>ATCC 204508 / S288c</strain>
    </source>
</reference>
<reference key="4">
    <citation type="journal article" date="2003" name="Nature">
        <title>Global analysis of protein expression in yeast.</title>
        <authorList>
            <person name="Ghaemmaghami S."/>
            <person name="Huh W.-K."/>
            <person name="Bower K."/>
            <person name="Howson R.W."/>
            <person name="Belle A."/>
            <person name="Dephoure N."/>
            <person name="O'Shea E.K."/>
            <person name="Weissman J.S."/>
        </authorList>
    </citation>
    <scope>LEVEL OF PROTEIN EXPRESSION [LARGE SCALE ANALYSIS]</scope>
</reference>
<reference key="5">
    <citation type="journal article" date="2018" name="Biochem. Biophys. Res. Commun.">
        <title>Structural and biochemical characterization of the yeast HD domain containing protein YGK1 reveals a metal-dependent nucleoside 5'-monophosphatase.</title>
        <authorList>
            <person name="Yang J."/>
            <person name="Wang F."/>
            <person name="Yang D."/>
            <person name="Zhou K."/>
            <person name="Liu M."/>
            <person name="Gao Z."/>
            <person name="Liu P."/>
            <person name="Dong Y."/>
            <person name="Zhang J."/>
            <person name="Liu Q."/>
        </authorList>
    </citation>
    <scope>FUNCTION</scope>
    <scope>CATALYTIC ACTIVITY</scope>
    <scope>COFACTOR</scope>
    <scope>SUBUNIT</scope>
</reference>
<feature type="chain" id="PRO_0000202522" description="5'-deoxynucleotidase YBR242W">
    <location>
        <begin position="1"/>
        <end position="238"/>
    </location>
</feature>
<feature type="domain" description="HD" evidence="3">
    <location>
        <begin position="77"/>
        <end position="183"/>
    </location>
</feature>
<feature type="binding site" evidence="1">
    <location>
        <position position="80"/>
    </location>
    <ligand>
        <name>a divalent metal cation</name>
        <dbReference type="ChEBI" id="CHEBI:60240"/>
        <label>1</label>
    </ligand>
</feature>
<feature type="binding site" evidence="1">
    <location>
        <position position="108"/>
    </location>
    <ligand>
        <name>a divalent metal cation</name>
        <dbReference type="ChEBI" id="CHEBI:60240"/>
        <label>1</label>
    </ligand>
</feature>
<feature type="binding site" evidence="1">
    <location>
        <position position="109"/>
    </location>
    <ligand>
        <name>a divalent metal cation</name>
        <dbReference type="ChEBI" id="CHEBI:60240"/>
        <label>1</label>
    </ligand>
</feature>
<feature type="binding site" evidence="2">
    <location>
        <position position="112"/>
    </location>
    <ligand>
        <name>a divalent metal cation</name>
        <dbReference type="ChEBI" id="CHEBI:60240"/>
        <label>2</label>
    </ligand>
</feature>
<feature type="binding site" evidence="2">
    <location>
        <position position="117"/>
    </location>
    <ligand>
        <name>a divalent metal cation</name>
        <dbReference type="ChEBI" id="CHEBI:60240"/>
        <label>2</label>
    </ligand>
</feature>
<feature type="binding site" evidence="2">
    <location>
        <position position="118"/>
    </location>
    <ligand>
        <name>a divalent metal cation</name>
        <dbReference type="ChEBI" id="CHEBI:60240"/>
        <label>2</label>
    </ligand>
</feature>
<feature type="binding site" evidence="1">
    <location>
        <position position="178"/>
    </location>
    <ligand>
        <name>a divalent metal cation</name>
        <dbReference type="ChEBI" id="CHEBI:60240"/>
        <label>1</label>
    </ligand>
</feature>
<comment type="function">
    <text evidence="5">Catalyzes the dephosphorylation of the nucleoside 5'-monophosphates deoxyadenosine monophosphate (dAMP), deoxycytidine monophosphate (dCMP), deoxyguanosine monophosphate (dGMP) and deoxythymidine monophosphate (dTMP).</text>
</comment>
<comment type="catalytic activity">
    <reaction evidence="5">
        <text>a 2'-deoxyribonucleoside 5'-phosphate + H2O = a 2'-deoxyribonucleoside + phosphate</text>
        <dbReference type="Rhea" id="RHEA:36167"/>
        <dbReference type="ChEBI" id="CHEBI:15377"/>
        <dbReference type="ChEBI" id="CHEBI:18274"/>
        <dbReference type="ChEBI" id="CHEBI:43474"/>
        <dbReference type="ChEBI" id="CHEBI:65317"/>
        <dbReference type="EC" id="3.1.3.89"/>
    </reaction>
</comment>
<comment type="cofactor">
    <cofactor evidence="5">
        <name>Mn(2+)</name>
        <dbReference type="ChEBI" id="CHEBI:29035"/>
    </cofactor>
    <cofactor evidence="5">
        <name>Co(2+)</name>
        <dbReference type="ChEBI" id="CHEBI:48828"/>
    </cofactor>
    <cofactor evidence="5">
        <name>Mg(2+)</name>
        <dbReference type="ChEBI" id="CHEBI:18420"/>
    </cofactor>
    <text evidence="2 5">Binds 2 divalent metal cations (By similarity). Shows activity with Mn(2+), Co(2+) and Mg(2+) but shows no activity with Zn(2+) (PubMed:29752939).</text>
</comment>
<comment type="subunit">
    <text evidence="5">Homodimer.</text>
</comment>
<comment type="miscellaneous">
    <text evidence="4">Present with 2730 molecules/cell in log phase SD medium.</text>
</comment>
<comment type="similarity">
    <text evidence="6">Belongs to the HDDC2 family.</text>
</comment>
<organism>
    <name type="scientific">Saccharomyces cerevisiae (strain ATCC 204508 / S288c)</name>
    <name type="common">Baker's yeast</name>
    <dbReference type="NCBI Taxonomy" id="559292"/>
    <lineage>
        <taxon>Eukaryota</taxon>
        <taxon>Fungi</taxon>
        <taxon>Dikarya</taxon>
        <taxon>Ascomycota</taxon>
        <taxon>Saccharomycotina</taxon>
        <taxon>Saccharomycetes</taxon>
        <taxon>Saccharomycetales</taxon>
        <taxon>Saccharomycetaceae</taxon>
        <taxon>Saccharomyces</taxon>
    </lineage>
</organism>
<sequence>MTATITNKKSCSGSVEAGKTRLTTEWKPESQVPQYVKNELSKPHPNYILAFLNVVQQLKIQRRTGYLDLGIKECESISDHMYRLSIITMLIKDSRVNRDKCVRIALVHDIAESLVGDITPVDPIGKEEKHRREWETIKYLCNALIKPYNEIAAKEIMDDWLAYENVTSLEARYVKDIDKYEMLVQCFEYEREYKGTKNFDDFFGAVASIKTDEVKGWTSDLVVQRQKYFADLTQSITK</sequence>
<gene>
    <name type="ordered locus">YBR242W</name>
    <name type="ORF">YBR1627</name>
</gene>
<proteinExistence type="evidence at protein level"/>
<name>YB92_YEAST</name>